<dbReference type="EMBL" id="BC122759">
    <property type="protein sequence ID" value="AAI22760.1"/>
    <property type="molecule type" value="mRNA"/>
</dbReference>
<dbReference type="RefSeq" id="NP_001039572.2">
    <property type="nucleotide sequence ID" value="NM_001046107.3"/>
</dbReference>
<dbReference type="BMRB" id="Q05B62"/>
<dbReference type="SMR" id="Q05B62"/>
<dbReference type="FunCoup" id="Q05B62">
    <property type="interactions" value="3967"/>
</dbReference>
<dbReference type="STRING" id="9913.ENSBTAP00000002609"/>
<dbReference type="PaxDb" id="9913-ENSBTAP00000002609"/>
<dbReference type="GeneID" id="512029"/>
<dbReference type="KEGG" id="bta:512029"/>
<dbReference type="CTD" id="6642"/>
<dbReference type="eggNOG" id="KOG2273">
    <property type="taxonomic scope" value="Eukaryota"/>
</dbReference>
<dbReference type="InParanoid" id="Q05B62"/>
<dbReference type="OrthoDB" id="271164at2759"/>
<dbReference type="Proteomes" id="UP000009136">
    <property type="component" value="Unplaced"/>
</dbReference>
<dbReference type="GO" id="GO:0005829">
    <property type="term" value="C:cytosol"/>
    <property type="evidence" value="ECO:0007669"/>
    <property type="project" value="GOC"/>
</dbReference>
<dbReference type="GO" id="GO:0031901">
    <property type="term" value="C:early endosome membrane"/>
    <property type="evidence" value="ECO:0007669"/>
    <property type="project" value="UniProtKB-SubCell"/>
</dbReference>
<dbReference type="GO" id="GO:0005768">
    <property type="term" value="C:endosome"/>
    <property type="evidence" value="ECO:0000318"/>
    <property type="project" value="GO_Central"/>
</dbReference>
<dbReference type="GO" id="GO:0010008">
    <property type="term" value="C:endosome membrane"/>
    <property type="evidence" value="ECO:0000250"/>
    <property type="project" value="UniProtKB"/>
</dbReference>
<dbReference type="GO" id="GO:0005794">
    <property type="term" value="C:Golgi apparatus"/>
    <property type="evidence" value="ECO:0007669"/>
    <property type="project" value="UniProtKB-SubCell"/>
</dbReference>
<dbReference type="GO" id="GO:0030027">
    <property type="term" value="C:lamellipodium"/>
    <property type="evidence" value="ECO:0007669"/>
    <property type="project" value="UniProtKB-SubCell"/>
</dbReference>
<dbReference type="GO" id="GO:0035091">
    <property type="term" value="F:phosphatidylinositol binding"/>
    <property type="evidence" value="ECO:0000250"/>
    <property type="project" value="UniProtKB"/>
</dbReference>
<dbReference type="GO" id="GO:0034498">
    <property type="term" value="P:early endosome to Golgi transport"/>
    <property type="evidence" value="ECO:0000318"/>
    <property type="project" value="GO_Central"/>
</dbReference>
<dbReference type="GO" id="GO:0006886">
    <property type="term" value="P:intracellular protein transport"/>
    <property type="evidence" value="ECO:0007669"/>
    <property type="project" value="InterPro"/>
</dbReference>
<dbReference type="GO" id="GO:0072673">
    <property type="term" value="P:lamellipodium morphogenesis"/>
    <property type="evidence" value="ECO:0000250"/>
    <property type="project" value="UniProtKB"/>
</dbReference>
<dbReference type="GO" id="GO:0031623">
    <property type="term" value="P:receptor internalization"/>
    <property type="evidence" value="ECO:0000250"/>
    <property type="project" value="UniProtKB"/>
</dbReference>
<dbReference type="GO" id="GO:0042147">
    <property type="term" value="P:retrograde transport, endosome to Golgi"/>
    <property type="evidence" value="ECO:0000250"/>
    <property type="project" value="UniProtKB"/>
</dbReference>
<dbReference type="CDD" id="cd07665">
    <property type="entry name" value="BAR_SNX1"/>
    <property type="match status" value="1"/>
</dbReference>
<dbReference type="CDD" id="cd07281">
    <property type="entry name" value="PX_SNX1"/>
    <property type="match status" value="1"/>
</dbReference>
<dbReference type="FunFam" id="3.30.1520.10:FF:000015">
    <property type="entry name" value="Sorting nexin 1"/>
    <property type="match status" value="1"/>
</dbReference>
<dbReference type="FunFam" id="1.20.1270.60:FF:000012">
    <property type="entry name" value="Sorting nexin 2"/>
    <property type="match status" value="1"/>
</dbReference>
<dbReference type="Gene3D" id="1.20.1270.60">
    <property type="entry name" value="Arfaptin homology (AH) domain/BAR domain"/>
    <property type="match status" value="1"/>
</dbReference>
<dbReference type="Gene3D" id="3.30.1520.10">
    <property type="entry name" value="Phox-like domain"/>
    <property type="match status" value="1"/>
</dbReference>
<dbReference type="InterPro" id="IPR027267">
    <property type="entry name" value="AH/BAR_dom_sf"/>
</dbReference>
<dbReference type="InterPro" id="IPR001683">
    <property type="entry name" value="PX_dom"/>
</dbReference>
<dbReference type="InterPro" id="IPR036871">
    <property type="entry name" value="PX_dom_sf"/>
</dbReference>
<dbReference type="InterPro" id="IPR034901">
    <property type="entry name" value="PX_SNX1"/>
</dbReference>
<dbReference type="InterPro" id="IPR028660">
    <property type="entry name" value="SNX1_BAR"/>
</dbReference>
<dbReference type="InterPro" id="IPR005329">
    <property type="entry name" value="Sorting_nexin_N"/>
</dbReference>
<dbReference type="InterPro" id="IPR015404">
    <property type="entry name" value="Vps5_C"/>
</dbReference>
<dbReference type="PANTHER" id="PTHR10555">
    <property type="entry name" value="SORTING NEXIN"/>
    <property type="match status" value="1"/>
</dbReference>
<dbReference type="PANTHER" id="PTHR10555:SF129">
    <property type="entry name" value="SORTING NEXIN-1"/>
    <property type="match status" value="1"/>
</dbReference>
<dbReference type="Pfam" id="PF00787">
    <property type="entry name" value="PX"/>
    <property type="match status" value="1"/>
</dbReference>
<dbReference type="Pfam" id="PF03700">
    <property type="entry name" value="Sorting_nexin"/>
    <property type="match status" value="1"/>
</dbReference>
<dbReference type="Pfam" id="PF09325">
    <property type="entry name" value="Vps5"/>
    <property type="match status" value="1"/>
</dbReference>
<dbReference type="SMART" id="SM00312">
    <property type="entry name" value="PX"/>
    <property type="match status" value="1"/>
</dbReference>
<dbReference type="SUPFAM" id="SSF103657">
    <property type="entry name" value="BAR/IMD domain-like"/>
    <property type="match status" value="1"/>
</dbReference>
<dbReference type="SUPFAM" id="SSF64268">
    <property type="entry name" value="PX domain"/>
    <property type="match status" value="1"/>
</dbReference>
<dbReference type="PROSITE" id="PS50195">
    <property type="entry name" value="PX"/>
    <property type="match status" value="1"/>
</dbReference>
<organism>
    <name type="scientific">Bos taurus</name>
    <name type="common">Bovine</name>
    <dbReference type="NCBI Taxonomy" id="9913"/>
    <lineage>
        <taxon>Eukaryota</taxon>
        <taxon>Metazoa</taxon>
        <taxon>Chordata</taxon>
        <taxon>Craniata</taxon>
        <taxon>Vertebrata</taxon>
        <taxon>Euteleostomi</taxon>
        <taxon>Mammalia</taxon>
        <taxon>Eutheria</taxon>
        <taxon>Laurasiatheria</taxon>
        <taxon>Artiodactyla</taxon>
        <taxon>Ruminantia</taxon>
        <taxon>Pecora</taxon>
        <taxon>Bovidae</taxon>
        <taxon>Bovinae</taxon>
        <taxon>Bos</taxon>
    </lineage>
</organism>
<gene>
    <name type="primary">SNX1</name>
</gene>
<feature type="chain" id="PRO_0000290185" description="Sorting nexin-1">
    <location>
        <begin position="1"/>
        <end position="522"/>
    </location>
</feature>
<feature type="domain" description="PX" evidence="5">
    <location>
        <begin position="143"/>
        <end position="272"/>
    </location>
</feature>
<feature type="domain" description="BAR">
    <location>
        <begin position="302"/>
        <end position="522"/>
    </location>
</feature>
<feature type="region of interest" description="Disordered" evidence="6">
    <location>
        <begin position="1"/>
        <end position="142"/>
    </location>
</feature>
<feature type="region of interest" description="Membrane-binding amphipathic helix" evidence="1">
    <location>
        <begin position="281"/>
        <end position="298"/>
    </location>
</feature>
<feature type="compositionally biased region" description="Acidic residues" evidence="6">
    <location>
        <begin position="35"/>
        <end position="45"/>
    </location>
</feature>
<feature type="compositionally biased region" description="Acidic residues" evidence="6">
    <location>
        <begin position="132"/>
        <end position="142"/>
    </location>
</feature>
<feature type="binding site" evidence="2">
    <location>
        <position position="186"/>
    </location>
    <ligand>
        <name>a 1,2-diacyl-sn-glycero-3-phospho-(1D-myo-inositol-3-phosphate)</name>
        <dbReference type="ChEBI" id="CHEBI:58088"/>
    </ligand>
</feature>
<feature type="binding site" evidence="2">
    <location>
        <position position="188"/>
    </location>
    <ligand>
        <name>a 1,2-diacyl-sn-glycero-3-phospho-(1D-myo-inositol-3-phosphate)</name>
        <dbReference type="ChEBI" id="CHEBI:58088"/>
    </ligand>
</feature>
<feature type="binding site" evidence="2">
    <location>
        <position position="214"/>
    </location>
    <ligand>
        <name>a 1,2-diacyl-sn-glycero-3-phospho-(1D-myo-inositol-3-phosphate)</name>
        <dbReference type="ChEBI" id="CHEBI:58088"/>
    </ligand>
</feature>
<feature type="binding site" evidence="2">
    <location>
        <position position="238"/>
    </location>
    <ligand>
        <name>a 1,2-diacyl-sn-glycero-3-phospho-(1D-myo-inositol-3-phosphate)</name>
        <dbReference type="ChEBI" id="CHEBI:58088"/>
    </ligand>
</feature>
<feature type="modified residue" description="Phosphoserine" evidence="1">
    <location>
        <position position="32"/>
    </location>
</feature>
<feature type="modified residue" description="Phosphoserine" evidence="1">
    <location>
        <position position="39"/>
    </location>
</feature>
<feature type="modified residue" description="Phosphothreonine" evidence="4">
    <location>
        <position position="41"/>
    </location>
</feature>
<feature type="modified residue" description="Phosphothreonine" evidence="1">
    <location>
        <position position="48"/>
    </location>
</feature>
<feature type="modified residue" description="Phosphoserine" evidence="4">
    <location>
        <position position="58"/>
    </location>
</feature>
<feature type="modified residue" description="Phosphoserine" evidence="1">
    <location>
        <position position="72"/>
    </location>
</feature>
<feature type="modified residue" description="Phosphoserine" evidence="1">
    <location>
        <position position="188"/>
    </location>
</feature>
<feature type="modified residue" description="N6-acetyllysine" evidence="1">
    <location>
        <position position="237"/>
    </location>
</feature>
<feature type="modified residue" description="Phosphoserine" evidence="1">
    <location>
        <position position="280"/>
    </location>
</feature>
<reference key="1">
    <citation type="submission" date="2006-08" db="EMBL/GenBank/DDBJ databases">
        <authorList>
            <consortium name="NIH - Mammalian Gene Collection (MGC) project"/>
        </authorList>
    </citation>
    <scope>NUCLEOTIDE SEQUENCE [LARGE SCALE MRNA]</scope>
    <source>
        <strain>Hereford</strain>
        <tissue>Heart ventricle</tissue>
    </source>
</reference>
<comment type="function">
    <text evidence="1">Involved in several stages of intracellular trafficking. Interacts with membranes containing phosphatidylinositol 3-phosphate (PtdIns(3P)) or phosphatidylinositol 3,5-bisphosphate (PtdIns(3,5)P2). Acts in part as component of the retromer membrane-deforming SNX-BAR subcomplex. The SNX-BAR retromer mediates retrograde transport of cargo proteins from endosomes to the trans-Golgi network (TGN) and is involved in endosome-to-plasma membrane transport for cargo protein recycling. The SNX-BAR subcomplex functions to deform the donor membrane into a tubular profile called endosome-to-TGN transport carrier (ETC). Can sense membrane curvature and has in vitro vesicle-to-membrane remodeling activity. Involved in retrograde endosome-to-TGN transport of lysosomal enzyme receptors (IGF2R, M6PR and SORT1). Plays a role in targeting ligand-activated EGFR to the lysosomes for degradation after endocytosis from the cell surface and release from the Golgi. Involvement in retromer-independent endocytic trafficking of P2RY1 and lysosomal degradation of protease-activated receptor-1/F2R. Promotes KALRN- and RHOG-dependent but retromer-independent membrane remodeling such as lamellipodium formation; the function is dependent on GEF activity of KALRN. Required for endocytosis of DRD5 upon agonist stimulation but not for basal receptor trafficking (By similarity).</text>
</comment>
<comment type="subunit">
    <text evidence="1 3">Predominantly forms heterodimers with BAR domain-containing sorting nexins SNX5, SNX6 and SNX32; can self-associate to form homodimers. The heterodimers are proposed to self-assemble into helical arrays on the membrane to stabilize and expand local membrane curvature underlying endosomal tubule formation. Thought to be a component of the originally described retromer complex (also called SNX-BAR retromer) which is a pentamer containing the heterotrimeric retromer cargo-selective complex (CSC), also described as vacuolar protein sorting subcomplex (VPS) and a heterodimeric membrane-deforming subcomplex formed between SNX1 or SNX2 and SNX5 or SNX6 (also called SNX-BAR subcomplex); the respective CSC and SNX-BAR subcomplexes associate with low affinity. Interacts with SNX5, SNX6, SNX32, VPS26A, VPS29, VPS35, DRD5, DENND5A, KALRN, RHOG (GDP-bound form). The interaction with SNX2 is reported controversially. Interacts with DNAJC13; prevented by presence of HGS. Interacts with HGS (By similarity).</text>
</comment>
<comment type="subcellular location">
    <subcellularLocation>
        <location evidence="1">Endosome membrane</location>
        <topology>Peripheral membrane protein</topology>
        <orientation>Cytoplasmic side</orientation>
    </subcellularLocation>
    <subcellularLocation>
        <location evidence="7">Golgi apparatus</location>
        <location evidence="7">trans-Golgi network membrane</location>
        <topology evidence="7">Peripheral membrane protein</topology>
        <orientation evidence="7">Cytoplasmic side</orientation>
    </subcellularLocation>
    <subcellularLocation>
        <location>Early endosome membrane</location>
        <topology>Peripheral membrane protein</topology>
        <orientation>Cytoplasmic side</orientation>
    </subcellularLocation>
    <subcellularLocation>
        <location evidence="1">Cell projection</location>
        <location evidence="1">Lamellipodium</location>
    </subcellularLocation>
    <text evidence="1">Enriched on tubular elements of the early endosome membrane. Binds preferentially to highly curved membranes enriched in phosphatidylinositol 3-phosphate (PtdIns(3P)) or phosphatidylinositol 3,5-bisphosphate (PtdIns(3,5)P2). Colocalized with SORT1 to tubular endosomal membrane structures called endosome-to-TGN transport carriers (ETCs) which are budding from early endosome vacuoles just before maturing into late endosome vacuoles. Colocalized with F-actin at the leading edge of lamellipodia in a KALRN-dependent manner.</text>
</comment>
<comment type="domain">
    <text evidence="1">The BAR domain is able to sense membrane curvature upon dimerization. Membrane remodeling seems to implicate insertion of a N-terminal amphipathic helix (AH) in the membrane (By similarity).</text>
</comment>
<comment type="miscellaneous">
    <text evidence="1">Binds phosphatidylinositol 3-phosphate (PtdIns-(3)P) and phosphatidylinositol 3,5-bisphosphate (PtdIns-(3,5)P2) in liposome-based assays. Can bind PtdIns(3,4,5)P3 in protein:lipid overlay assays, but not in liposome-based assays (By similarity).</text>
</comment>
<comment type="similarity">
    <text evidence="7">Belongs to the sorting nexin family.</text>
</comment>
<keyword id="KW-0007">Acetylation</keyword>
<keyword id="KW-0966">Cell projection</keyword>
<keyword id="KW-0967">Endosome</keyword>
<keyword id="KW-0333">Golgi apparatus</keyword>
<keyword id="KW-0446">Lipid-binding</keyword>
<keyword id="KW-0472">Membrane</keyword>
<keyword id="KW-0597">Phosphoprotein</keyword>
<keyword id="KW-0653">Protein transport</keyword>
<keyword id="KW-1185">Reference proteome</keyword>
<keyword id="KW-0813">Transport</keyword>
<protein>
    <recommendedName>
        <fullName>Sorting nexin-1</fullName>
    </recommendedName>
</protein>
<name>SNX1_BOVIN</name>
<evidence type="ECO:0000250" key="1">
    <source>
        <dbReference type="UniProtKB" id="Q13596"/>
    </source>
</evidence>
<evidence type="ECO:0000250" key="2">
    <source>
        <dbReference type="UniProtKB" id="Q96L94"/>
    </source>
</evidence>
<evidence type="ECO:0000250" key="3">
    <source>
        <dbReference type="UniProtKB" id="Q99N27"/>
    </source>
</evidence>
<evidence type="ECO:0000250" key="4">
    <source>
        <dbReference type="UniProtKB" id="Q9WV80"/>
    </source>
</evidence>
<evidence type="ECO:0000255" key="5">
    <source>
        <dbReference type="PROSITE-ProRule" id="PRU00147"/>
    </source>
</evidence>
<evidence type="ECO:0000256" key="6">
    <source>
        <dbReference type="SAM" id="MobiDB-lite"/>
    </source>
</evidence>
<evidence type="ECO:0000305" key="7"/>
<accession>Q05B62</accession>
<sequence>MASGGGGCSASERLPPPFPGLEPESEGAVGGSEPEAGDSDTEGEDIFTGAAAVSKPQSPKRIASLLPINSGSKENGIHEEQDQEPQDLFADATVELSLDSTQNNQKKVPAKTLISLPPQEATNSSKPQPSYEELEEEEQEDQFDLTVGITDPEKIGDGMNAYVAYKVTTQTSLPMFRSKHFAVKRRFSDFLGLYEKLSEKHSQNGFIVPPPPEKSLIGMTKVKVGKEDSSSAEFLEKRRAALERYLQRIVNHPTMLQDPDVREFLEKEELPRAVGTQTLSGAGLLKMFNKATDAVSKMTINMNESDIWFEEKLQEVECEEQRLRKLHAVVETLVNHRKELALNTAQFAKSLAMLGSSEDNTALSRALSQLAEVEEKIEQLHQEQANNDFFLLAELLSDYIRLLAIVRAAFDQRMKTWQRWQDAQTTLQKKREAEARLLWANKPDKLQQAKDEIVEWESRVTQYERDFERISTVVRKEVIRFEKEKSRDFRNHVIQYLETLLHSQQQLAKYWEAFLPEAKAIS</sequence>
<proteinExistence type="evidence at transcript level"/>